<protein>
    <recommendedName>
        <fullName evidence="3">L-malyl-CoA/beta-methylmalyl-CoA lyase</fullName>
        <ecNumber>4.1.3.24</ecNumber>
    </recommendedName>
    <alternativeName>
        <fullName evidence="3">(3S)-malyl-CoA/beta-methylmalyl-CoA lyase</fullName>
    </alternativeName>
</protein>
<evidence type="ECO:0000250" key="1"/>
<evidence type="ECO:0000250" key="2">
    <source>
        <dbReference type="UniProtKB" id="B6E2X2"/>
    </source>
</evidence>
<evidence type="ECO:0000250" key="3">
    <source>
        <dbReference type="UniProtKB" id="Q3J5L6"/>
    </source>
</evidence>
<evidence type="ECO:0000250" key="4">
    <source>
        <dbReference type="UniProtKB" id="Q9RUZ0"/>
    </source>
</evidence>
<evidence type="ECO:0000305" key="5"/>
<evidence type="ECO:0000312" key="6">
    <source>
        <dbReference type="EMBL" id="ABN75533.1"/>
    </source>
</evidence>
<accession>A3PGR7</accession>
<reference evidence="6" key="1">
    <citation type="submission" date="2007-02" db="EMBL/GenBank/DDBJ databases">
        <title>Complete sequence of chromosome 1 of Rhodobacter sphaeroides ATCC 17029.</title>
        <authorList>
            <person name="Copeland A."/>
            <person name="Lucas S."/>
            <person name="Lapidus A."/>
            <person name="Barry K."/>
            <person name="Detter J.C."/>
            <person name="Glavina del Rio T."/>
            <person name="Hammon N."/>
            <person name="Israni S."/>
            <person name="Dalin E."/>
            <person name="Tice H."/>
            <person name="Pitluck S."/>
            <person name="Kiss H."/>
            <person name="Brettin T."/>
            <person name="Bruce D."/>
            <person name="Han C."/>
            <person name="Tapia R."/>
            <person name="Gilna P."/>
            <person name="Schmutz J."/>
            <person name="Larimer F."/>
            <person name="Land M."/>
            <person name="Hauser L."/>
            <person name="Kyrpides N."/>
            <person name="Mikhailova N."/>
            <person name="Richardson P."/>
            <person name="Mackenzie C."/>
            <person name="Choudhary M."/>
            <person name="Donohue T.J."/>
            <person name="Kaplan S."/>
        </authorList>
    </citation>
    <scope>NUCLEOTIDE SEQUENCE [LARGE SCALE GENOMIC DNA]</scope>
    <source>
        <strain>ATCC 17029 / ATH 2.4.9</strain>
    </source>
</reference>
<sequence length="318" mass="34288">MSFRLQPAPPARPNRCQLFGPGSRPALFEKMAASAADVINLDLEDSVAPDDKAQARANIIEAINGLDWGRKYLSVRINGLDTPFWYRDVVDLLEQAGDRLDQIMIPKVGCAADVYAVDALVTAIERAKGRTKPLSFEVIIESAAGIAHVEEIAASSPRLQAMSLGAADFAASMGMQTTGIGGTQENYYMLHDGQKHWSDPWHWAQAAIVAACRTHGILPVDGPFGDFSDDEGFRAQARRSATLGMVGKWAIHPKQVALANEVFTPSETAVTEAREILAAMDAAKARGEGATVYKGRLVDIASIKQAEVIVRQAEMISA</sequence>
<keyword id="KW-0456">Lyase</keyword>
<keyword id="KW-0460">Magnesium</keyword>
<keyword id="KW-0464">Manganese</keyword>
<keyword id="KW-0479">Metal-binding</keyword>
<comment type="function">
    <text evidence="1">Involved in the ethylmalonyl-CoA pathway for acetate assimilation. Catalyzes the reversible condensation of glyoxylate and acetyl-CoA to L-malyl-CoA and the reversible condensation of glyoxylate and propionyl-CoA to yield beta-methylmalyl-CoA (By similarity).</text>
</comment>
<comment type="catalytic activity">
    <reaction>
        <text>(S)-malyl-CoA = glyoxylate + acetyl-CoA</text>
        <dbReference type="Rhea" id="RHEA:16629"/>
        <dbReference type="ChEBI" id="CHEBI:36655"/>
        <dbReference type="ChEBI" id="CHEBI:57288"/>
        <dbReference type="ChEBI" id="CHEBI:57317"/>
        <dbReference type="EC" id="4.1.3.24"/>
    </reaction>
</comment>
<comment type="catalytic activity">
    <reaction>
        <text>(2R,3S)-beta-methylmalyl-CoA = propanoyl-CoA + glyoxylate</text>
        <dbReference type="Rhea" id="RHEA:38259"/>
        <dbReference type="ChEBI" id="CHEBI:36655"/>
        <dbReference type="ChEBI" id="CHEBI:57392"/>
        <dbReference type="ChEBI" id="CHEBI:75634"/>
        <dbReference type="EC" id="4.1.3.24"/>
    </reaction>
</comment>
<comment type="cofactor">
    <cofactor evidence="1">
        <name>Mg(2+)</name>
        <dbReference type="ChEBI" id="CHEBI:18420"/>
    </cofactor>
    <cofactor evidence="1">
        <name>Mn(2+)</name>
        <dbReference type="ChEBI" id="CHEBI:29035"/>
    </cofactor>
    <text evidence="1">Divalent cations such as magnesium or manganese.</text>
</comment>
<comment type="subunit">
    <text evidence="1">Homohexamer. Dimer of trimers (By similarity).</text>
</comment>
<comment type="similarity">
    <text evidence="5">Belongs to the HpcH/HpaI aldolase family.</text>
</comment>
<name>MCAL_CERS1</name>
<gene>
    <name evidence="3" type="primary">mcl1</name>
    <name type="ordered locus">Rsph17029_0417</name>
</gene>
<organism>
    <name type="scientific">Cereibacter sphaeroides (strain ATCC 17029 / ATH 2.4.9)</name>
    <name type="common">Rhodobacter sphaeroides</name>
    <dbReference type="NCBI Taxonomy" id="349101"/>
    <lineage>
        <taxon>Bacteria</taxon>
        <taxon>Pseudomonadati</taxon>
        <taxon>Pseudomonadota</taxon>
        <taxon>Alphaproteobacteria</taxon>
        <taxon>Rhodobacterales</taxon>
        <taxon>Paracoccaceae</taxon>
        <taxon>Cereibacter</taxon>
    </lineage>
</organism>
<proteinExistence type="inferred from homology"/>
<dbReference type="EC" id="4.1.3.24"/>
<dbReference type="EMBL" id="CP000577">
    <property type="protein sequence ID" value="ABN75533.1"/>
    <property type="molecule type" value="Genomic_DNA"/>
</dbReference>
<dbReference type="RefSeq" id="WP_011336971.1">
    <property type="nucleotide sequence ID" value="NC_009049.1"/>
</dbReference>
<dbReference type="SMR" id="A3PGR7"/>
<dbReference type="GeneID" id="67445557"/>
<dbReference type="KEGG" id="rsh:Rsph17029_0417"/>
<dbReference type="HOGENOM" id="CLU_044864_0_1_5"/>
<dbReference type="GO" id="GO:0043959">
    <property type="term" value="F:L-erythro-3-methylmalyl-CoA lyase activity"/>
    <property type="evidence" value="ECO:0007669"/>
    <property type="project" value="RHEA"/>
</dbReference>
<dbReference type="GO" id="GO:0000287">
    <property type="term" value="F:magnesium ion binding"/>
    <property type="evidence" value="ECO:0007669"/>
    <property type="project" value="TreeGrafter"/>
</dbReference>
<dbReference type="GO" id="GO:0050083">
    <property type="term" value="F:malyl-CoA lyase activity"/>
    <property type="evidence" value="ECO:0000250"/>
    <property type="project" value="UniProtKB"/>
</dbReference>
<dbReference type="GO" id="GO:0046872">
    <property type="term" value="F:metal ion binding"/>
    <property type="evidence" value="ECO:0000250"/>
    <property type="project" value="UniProtKB"/>
</dbReference>
<dbReference type="GO" id="GO:0006107">
    <property type="term" value="P:oxaloacetate metabolic process"/>
    <property type="evidence" value="ECO:0007669"/>
    <property type="project" value="TreeGrafter"/>
</dbReference>
<dbReference type="FunFam" id="3.20.20.60:FF:000020">
    <property type="entry name" value="Malyl-CoA lyase"/>
    <property type="match status" value="1"/>
</dbReference>
<dbReference type="Gene3D" id="3.20.20.60">
    <property type="entry name" value="Phosphoenolpyruvate-binding domains"/>
    <property type="match status" value="1"/>
</dbReference>
<dbReference type="InterPro" id="IPR005000">
    <property type="entry name" value="Aldolase/citrate-lyase_domain"/>
</dbReference>
<dbReference type="InterPro" id="IPR011206">
    <property type="entry name" value="Citrate_lyase_beta/mcl1/mcl2"/>
</dbReference>
<dbReference type="InterPro" id="IPR015813">
    <property type="entry name" value="Pyrv/PenolPyrv_kinase-like_dom"/>
</dbReference>
<dbReference type="InterPro" id="IPR040442">
    <property type="entry name" value="Pyrv_kinase-like_dom_sf"/>
</dbReference>
<dbReference type="PANTHER" id="PTHR32308:SF10">
    <property type="entry name" value="CITRATE LYASE SUBUNIT BETA"/>
    <property type="match status" value="1"/>
</dbReference>
<dbReference type="PANTHER" id="PTHR32308">
    <property type="entry name" value="LYASE BETA SUBUNIT, PUTATIVE (AFU_ORTHOLOGUE AFUA_4G13030)-RELATED"/>
    <property type="match status" value="1"/>
</dbReference>
<dbReference type="Pfam" id="PF03328">
    <property type="entry name" value="HpcH_HpaI"/>
    <property type="match status" value="1"/>
</dbReference>
<dbReference type="PIRSF" id="PIRSF015582">
    <property type="entry name" value="Cit_lyase_B"/>
    <property type="match status" value="1"/>
</dbReference>
<dbReference type="SUPFAM" id="SSF51621">
    <property type="entry name" value="Phosphoenolpyruvate/pyruvate domain"/>
    <property type="match status" value="1"/>
</dbReference>
<feature type="initiator methionine" description="Removed" evidence="2">
    <location>
        <position position="1"/>
    </location>
</feature>
<feature type="chain" id="PRO_0000404703" description="L-malyl-CoA/beta-methylmalyl-CoA lyase">
    <location>
        <begin position="2"/>
        <end position="318"/>
    </location>
</feature>
<feature type="binding site" evidence="1">
    <location>
        <position position="19"/>
    </location>
    <ligand>
        <name>substrate</name>
    </ligand>
</feature>
<feature type="binding site" evidence="1">
    <location>
        <position position="24"/>
    </location>
    <ligand>
        <name>substrate</name>
    </ligand>
</feature>
<feature type="binding site" evidence="1">
    <location>
        <position position="30"/>
    </location>
    <ligand>
        <name>substrate</name>
    </ligand>
</feature>
<feature type="binding site" evidence="4">
    <location>
        <position position="76"/>
    </location>
    <ligand>
        <name>substrate</name>
    </ligand>
</feature>
<feature type="binding site" evidence="1">
    <location>
        <position position="141"/>
    </location>
    <ligand>
        <name>Mg(2+)</name>
        <dbReference type="ChEBI" id="CHEBI:18420"/>
    </ligand>
</feature>
<feature type="binding site" evidence="1">
    <location>
        <begin position="167"/>
        <end position="168"/>
    </location>
    <ligand>
        <name>substrate</name>
    </ligand>
</feature>
<feature type="binding site" evidence="1">
    <location>
        <position position="168"/>
    </location>
    <ligand>
        <name>Mg(2+)</name>
        <dbReference type="ChEBI" id="CHEBI:18420"/>
    </ligand>
</feature>
<feature type="binding site" evidence="1">
    <location>
        <begin position="251"/>
        <end position="252"/>
    </location>
    <ligand>
        <name>substrate</name>
    </ligand>
</feature>